<dbReference type="EC" id="2.1.1.37" evidence="5"/>
<dbReference type="EMBL" id="Y00449">
    <property type="protein sequence ID" value="CAA68505.1"/>
    <property type="molecule type" value="Genomic_DNA"/>
</dbReference>
<dbReference type="RefSeq" id="WP_092194698.1">
    <property type="nucleotide sequence ID" value="NZ_FOTO01000026.1"/>
</dbReference>
<dbReference type="SMR" id="P05302"/>
<dbReference type="STRING" id="52561.SAMN05421830_1265"/>
<dbReference type="REBASE" id="3357">
    <property type="entry name" value="M.DdeI"/>
</dbReference>
<dbReference type="OrthoDB" id="9813719at2"/>
<dbReference type="PRO" id="PR:P05302"/>
<dbReference type="GO" id="GO:0003886">
    <property type="term" value="F:DNA (cytosine-5-)-methyltransferase activity"/>
    <property type="evidence" value="ECO:0007669"/>
    <property type="project" value="UniProtKB-EC"/>
</dbReference>
<dbReference type="GO" id="GO:0003677">
    <property type="term" value="F:DNA binding"/>
    <property type="evidence" value="ECO:0007669"/>
    <property type="project" value="UniProtKB-KW"/>
</dbReference>
<dbReference type="GO" id="GO:0009307">
    <property type="term" value="P:DNA restriction-modification system"/>
    <property type="evidence" value="ECO:0007669"/>
    <property type="project" value="UniProtKB-KW"/>
</dbReference>
<dbReference type="GO" id="GO:0032259">
    <property type="term" value="P:methylation"/>
    <property type="evidence" value="ECO:0007669"/>
    <property type="project" value="UniProtKB-KW"/>
</dbReference>
<dbReference type="GO" id="GO:0044027">
    <property type="term" value="P:negative regulation of gene expression via chromosomal CpG island methylation"/>
    <property type="evidence" value="ECO:0007669"/>
    <property type="project" value="TreeGrafter"/>
</dbReference>
<dbReference type="CDD" id="cd00315">
    <property type="entry name" value="Cyt_C5_DNA_methylase"/>
    <property type="match status" value="1"/>
</dbReference>
<dbReference type="Gene3D" id="3.90.120.10">
    <property type="entry name" value="DNA Methylase, subunit A, domain 2"/>
    <property type="match status" value="1"/>
</dbReference>
<dbReference type="Gene3D" id="3.40.50.150">
    <property type="entry name" value="Vaccinia Virus protein VP39"/>
    <property type="match status" value="1"/>
</dbReference>
<dbReference type="InterPro" id="IPR050390">
    <property type="entry name" value="C5-Methyltransferase"/>
</dbReference>
<dbReference type="InterPro" id="IPR018117">
    <property type="entry name" value="C5_DNA_meth_AS"/>
</dbReference>
<dbReference type="InterPro" id="IPR001525">
    <property type="entry name" value="C5_MeTfrase"/>
</dbReference>
<dbReference type="InterPro" id="IPR031303">
    <property type="entry name" value="C5_meth_CS"/>
</dbReference>
<dbReference type="InterPro" id="IPR029063">
    <property type="entry name" value="SAM-dependent_MTases_sf"/>
</dbReference>
<dbReference type="NCBIfam" id="TIGR00675">
    <property type="entry name" value="dcm"/>
    <property type="match status" value="1"/>
</dbReference>
<dbReference type="PANTHER" id="PTHR10629">
    <property type="entry name" value="CYTOSINE-SPECIFIC METHYLTRANSFERASE"/>
    <property type="match status" value="1"/>
</dbReference>
<dbReference type="PANTHER" id="PTHR10629:SF52">
    <property type="entry name" value="DNA (CYTOSINE-5)-METHYLTRANSFERASE 1"/>
    <property type="match status" value="1"/>
</dbReference>
<dbReference type="Pfam" id="PF00145">
    <property type="entry name" value="DNA_methylase"/>
    <property type="match status" value="1"/>
</dbReference>
<dbReference type="PRINTS" id="PR00105">
    <property type="entry name" value="C5METTRFRASE"/>
</dbReference>
<dbReference type="SUPFAM" id="SSF53335">
    <property type="entry name" value="S-adenosyl-L-methionine-dependent methyltransferases"/>
    <property type="match status" value="1"/>
</dbReference>
<dbReference type="PROSITE" id="PS00094">
    <property type="entry name" value="C5_MTASE_1"/>
    <property type="match status" value="1"/>
</dbReference>
<dbReference type="PROSITE" id="PS00095">
    <property type="entry name" value="C5_MTASE_2"/>
    <property type="match status" value="1"/>
</dbReference>
<dbReference type="PROSITE" id="PS51679">
    <property type="entry name" value="SAM_MT_C5"/>
    <property type="match status" value="1"/>
</dbReference>
<gene>
    <name type="primary">ddeIM</name>
    <name type="synonym">ddeM</name>
</gene>
<proteinExistence type="evidence at protein level"/>
<protein>
    <recommendedName>
        <fullName evidence="3">Type II methyltransferase M.DdeI</fullName>
        <shortName evidence="4">M.DdeI</shortName>
        <ecNumber evidence="5">2.1.1.37</ecNumber>
    </recommendedName>
    <alternativeName>
        <fullName>Cytosine-specific methyltransferase DdeI</fullName>
    </alternativeName>
    <alternativeName>
        <fullName>Modification methylase DdeI</fullName>
    </alternativeName>
</protein>
<feature type="chain" id="PRO_0000087873" description="Type II methyltransferase M.DdeI">
    <location>
        <begin position="1"/>
        <end position="415"/>
    </location>
</feature>
<feature type="domain" description="SAM-dependent MTase C5-type" evidence="1">
    <location>
        <begin position="1"/>
        <end position="373"/>
    </location>
</feature>
<feature type="active site" evidence="1 2">
    <location>
        <position position="76"/>
    </location>
</feature>
<evidence type="ECO:0000255" key="1">
    <source>
        <dbReference type="PROSITE-ProRule" id="PRU01016"/>
    </source>
</evidence>
<evidence type="ECO:0000255" key="2">
    <source>
        <dbReference type="PROSITE-ProRule" id="PRU10018"/>
    </source>
</evidence>
<evidence type="ECO:0000303" key="3">
    <source>
    </source>
</evidence>
<evidence type="ECO:0000303" key="4">
    <source>
    </source>
</evidence>
<evidence type="ECO:0000305" key="5">
    <source>
    </source>
</evidence>
<comment type="function">
    <text evidence="3 5">A methylase that recognizes the double-stranded sequence 5'-CTNAG-3', methylates C-1 on both strands, and protects the DNA from cleavage by the DdeI endonuclease.</text>
</comment>
<comment type="catalytic activity">
    <reaction evidence="2 5">
        <text>a 2'-deoxycytidine in DNA + S-adenosyl-L-methionine = a 5-methyl-2'-deoxycytidine in DNA + S-adenosyl-L-homocysteine + H(+)</text>
        <dbReference type="Rhea" id="RHEA:13681"/>
        <dbReference type="Rhea" id="RHEA-COMP:11369"/>
        <dbReference type="Rhea" id="RHEA-COMP:11370"/>
        <dbReference type="ChEBI" id="CHEBI:15378"/>
        <dbReference type="ChEBI" id="CHEBI:57856"/>
        <dbReference type="ChEBI" id="CHEBI:59789"/>
        <dbReference type="ChEBI" id="CHEBI:85452"/>
        <dbReference type="ChEBI" id="CHEBI:85454"/>
        <dbReference type="EC" id="2.1.1.37"/>
    </reaction>
</comment>
<comment type="similarity">
    <text evidence="1">Belongs to the class I-like SAM-binding methyltransferase superfamily. C5-methyltransferase family.</text>
</comment>
<organism>
    <name type="scientific">Desulfomicrobium norvegicum (strain DSM 1741 / NCIMB 8310)</name>
    <name type="common">Desulfovibrio baculatus (strain Norway 4)</name>
    <name type="synonym">Desulfovibrio desulfuricans (strain Norway 4)</name>
    <dbReference type="NCBI Taxonomy" id="52561"/>
    <lineage>
        <taxon>Bacteria</taxon>
        <taxon>Pseudomonadati</taxon>
        <taxon>Thermodesulfobacteriota</taxon>
        <taxon>Desulfovibrionia</taxon>
        <taxon>Desulfovibrionales</taxon>
        <taxon>Desulfomicrobiaceae</taxon>
        <taxon>Desulfomicrobium</taxon>
    </lineage>
</organism>
<keyword id="KW-0238">DNA-binding</keyword>
<keyword id="KW-0489">Methyltransferase</keyword>
<keyword id="KW-0680">Restriction system</keyword>
<keyword id="KW-0949">S-adenosyl-L-methionine</keyword>
<keyword id="KW-0808">Transferase</keyword>
<sequence length="415" mass="47081">MNIIDLFAGCGGFSHGFKMAGYNSILAIEKDLWASQTYSFNNPNVSVITEDITTLDPGDLKISVSDVDGIIGGPPCQGFSLSGNRDQKDPRNSLFVDFVRFVKFFSPKFFVMENVLGILSMKTKSRQYVKDIIAEEFSNVGYKVCVIILNACDYGVPQSRQRVFFIGLKSDRPLNQQILTPPSKVIESEYTSLEEAISDLPVIEAGEGGEVQDYPVAPRNKYQENMRKGSTCVYNHVAMRHTQRLVDRFAAIKFGQSVKHVSEEHSQRKRGDANSISGKVFSQNNMRPYPYKPCPTVAASFQSNFIHPFYNRNFTAREGARIQSFPDTYIFQGKRTTMSWEKHLSQYQQIGNAVPPLLAQALAERISWYFENINLINDSNVSIKRMVQRSFMSQLNLENNVNVRQDDNYDKVHSF</sequence>
<reference key="1">
    <citation type="journal article" date="1987" name="Nucleic Acids Res.">
        <title>Nucleotide sequence of the DdeI restriction-modification system and characterization of the methylase protein.</title>
        <authorList>
            <person name="Sznyter L.A."/>
            <person name="Slatko B."/>
            <person name="Moran L."/>
            <person name="O'Donnell K.H."/>
            <person name="Brooks J.E."/>
        </authorList>
    </citation>
    <scope>NUCLEOTIDE SEQUENCE [GENOMIC DNA]</scope>
    <scope>FUNCTION AS A METHYLASE</scope>
</reference>
<reference key="2">
    <citation type="journal article" date="2003" name="Nucleic Acids Res.">
        <title>A nomenclature for restriction enzymes, DNA methyltransferases, homing endonucleases and their genes.</title>
        <authorList>
            <person name="Roberts R.J."/>
            <person name="Belfort M."/>
            <person name="Bestor T."/>
            <person name="Bhagwat A.S."/>
            <person name="Bickle T.A."/>
            <person name="Bitinaite J."/>
            <person name="Blumenthal R.M."/>
            <person name="Degtyarev S.K."/>
            <person name="Dryden D.T."/>
            <person name="Dybvig K."/>
            <person name="Firman K."/>
            <person name="Gromova E.S."/>
            <person name="Gumport R.I."/>
            <person name="Halford S.E."/>
            <person name="Hattman S."/>
            <person name="Heitman J."/>
            <person name="Hornby D.P."/>
            <person name="Janulaitis A."/>
            <person name="Jeltsch A."/>
            <person name="Josephsen J."/>
            <person name="Kiss A."/>
            <person name="Klaenhammer T.R."/>
            <person name="Kobayashi I."/>
            <person name="Kong H."/>
            <person name="Krueger D.H."/>
            <person name="Lacks S."/>
            <person name="Marinus M.G."/>
            <person name="Miyahara M."/>
            <person name="Morgan R.D."/>
            <person name="Murray N.E."/>
            <person name="Nagaraja V."/>
            <person name="Piekarowicz A."/>
            <person name="Pingoud A."/>
            <person name="Raleigh E."/>
            <person name="Rao D.N."/>
            <person name="Reich N."/>
            <person name="Repin V.E."/>
            <person name="Selker E.U."/>
            <person name="Shaw P.C."/>
            <person name="Stein D.C."/>
            <person name="Stoddard B.L."/>
            <person name="Szybalski W."/>
            <person name="Trautner T.A."/>
            <person name="Van Etten J.L."/>
            <person name="Vitor J.M."/>
            <person name="Wilson G.G."/>
            <person name="Xu S.Y."/>
        </authorList>
    </citation>
    <scope>NOMENCLATURE</scope>
</reference>
<accession>P05302</accession>
<name>MTD1_DESNO</name>